<name>RLME_SHIB3</name>
<protein>
    <recommendedName>
        <fullName evidence="1">Ribosomal RNA large subunit methyltransferase E</fullName>
        <ecNumber evidence="1">2.1.1.166</ecNumber>
    </recommendedName>
    <alternativeName>
        <fullName evidence="1">23S rRNA Um2552 methyltransferase</fullName>
    </alternativeName>
    <alternativeName>
        <fullName evidence="1">rRNA (uridine-2'-O-)-methyltransferase</fullName>
    </alternativeName>
</protein>
<feature type="chain" id="PRO_1000195022" description="Ribosomal RNA large subunit methyltransferase E">
    <location>
        <begin position="1"/>
        <end position="209"/>
    </location>
</feature>
<feature type="active site" description="Proton acceptor" evidence="1">
    <location>
        <position position="164"/>
    </location>
</feature>
<feature type="binding site" evidence="1">
    <location>
        <position position="63"/>
    </location>
    <ligand>
        <name>S-adenosyl-L-methionine</name>
        <dbReference type="ChEBI" id="CHEBI:59789"/>
    </ligand>
</feature>
<feature type="binding site" evidence="1">
    <location>
        <position position="65"/>
    </location>
    <ligand>
        <name>S-adenosyl-L-methionine</name>
        <dbReference type="ChEBI" id="CHEBI:59789"/>
    </ligand>
</feature>
<feature type="binding site" evidence="1">
    <location>
        <position position="83"/>
    </location>
    <ligand>
        <name>S-adenosyl-L-methionine</name>
        <dbReference type="ChEBI" id="CHEBI:59789"/>
    </ligand>
</feature>
<feature type="binding site" evidence="1">
    <location>
        <position position="99"/>
    </location>
    <ligand>
        <name>S-adenosyl-L-methionine</name>
        <dbReference type="ChEBI" id="CHEBI:59789"/>
    </ligand>
</feature>
<feature type="binding site" evidence="1">
    <location>
        <position position="124"/>
    </location>
    <ligand>
        <name>S-adenosyl-L-methionine</name>
        <dbReference type="ChEBI" id="CHEBI:59789"/>
    </ligand>
</feature>
<organism>
    <name type="scientific">Shigella boydii serotype 18 (strain CDC 3083-94 / BS512)</name>
    <dbReference type="NCBI Taxonomy" id="344609"/>
    <lineage>
        <taxon>Bacteria</taxon>
        <taxon>Pseudomonadati</taxon>
        <taxon>Pseudomonadota</taxon>
        <taxon>Gammaproteobacteria</taxon>
        <taxon>Enterobacterales</taxon>
        <taxon>Enterobacteriaceae</taxon>
        <taxon>Shigella</taxon>
    </lineage>
</organism>
<proteinExistence type="inferred from homology"/>
<gene>
    <name evidence="1" type="primary">rlmE</name>
    <name evidence="1" type="synonym">ftsJ</name>
    <name evidence="1" type="synonym">rrmJ</name>
    <name type="ordered locus">SbBS512_E3591</name>
</gene>
<comment type="function">
    <text evidence="1">Specifically methylates the uridine in position 2552 of 23S rRNA at the 2'-O position of the ribose in the fully assembled 50S ribosomal subunit.</text>
</comment>
<comment type="catalytic activity">
    <reaction evidence="1">
        <text>uridine(2552) in 23S rRNA + S-adenosyl-L-methionine = 2'-O-methyluridine(2552) in 23S rRNA + S-adenosyl-L-homocysteine + H(+)</text>
        <dbReference type="Rhea" id="RHEA:42720"/>
        <dbReference type="Rhea" id="RHEA-COMP:10202"/>
        <dbReference type="Rhea" id="RHEA-COMP:10203"/>
        <dbReference type="ChEBI" id="CHEBI:15378"/>
        <dbReference type="ChEBI" id="CHEBI:57856"/>
        <dbReference type="ChEBI" id="CHEBI:59789"/>
        <dbReference type="ChEBI" id="CHEBI:65315"/>
        <dbReference type="ChEBI" id="CHEBI:74478"/>
        <dbReference type="EC" id="2.1.1.166"/>
    </reaction>
</comment>
<comment type="subcellular location">
    <subcellularLocation>
        <location evidence="1">Cytoplasm</location>
    </subcellularLocation>
</comment>
<comment type="similarity">
    <text evidence="1">Belongs to the class I-like SAM-binding methyltransferase superfamily. RNA methyltransferase RlmE family.</text>
</comment>
<sequence>MTGKKRSASSSRWLQEHFSDKYVQQAQKKGLRSRAWFKLDEIQQSDKLFKPGMTVVDLGAAPGGWSQYVVTQIGGKGRIIACDLLPMDPIVGVDFLQGDFRDELVMKALLERVGDSKVQVVMSDMAPNMSGTPAVDIPRAMYLVELALEMCRDVLAPGGSFVVKVFQGEGFDEYLREIRSLFTKVKVRKPDSSRARSREVYIVATGRKP</sequence>
<keyword id="KW-0963">Cytoplasm</keyword>
<keyword id="KW-0489">Methyltransferase</keyword>
<keyword id="KW-1185">Reference proteome</keyword>
<keyword id="KW-0698">rRNA processing</keyword>
<keyword id="KW-0949">S-adenosyl-L-methionine</keyword>
<keyword id="KW-0808">Transferase</keyword>
<dbReference type="EC" id="2.1.1.166" evidence="1"/>
<dbReference type="EMBL" id="CP001063">
    <property type="protein sequence ID" value="ACD06608.1"/>
    <property type="molecule type" value="Genomic_DNA"/>
</dbReference>
<dbReference type="RefSeq" id="WP_000145975.1">
    <property type="nucleotide sequence ID" value="NC_010658.1"/>
</dbReference>
<dbReference type="SMR" id="B2U1Z8"/>
<dbReference type="STRING" id="344609.SbBS512_E3591"/>
<dbReference type="GeneID" id="93778802"/>
<dbReference type="KEGG" id="sbc:SbBS512_E3591"/>
<dbReference type="HOGENOM" id="CLU_009422_4_0_6"/>
<dbReference type="Proteomes" id="UP000001030">
    <property type="component" value="Chromosome"/>
</dbReference>
<dbReference type="GO" id="GO:0005737">
    <property type="term" value="C:cytoplasm"/>
    <property type="evidence" value="ECO:0007669"/>
    <property type="project" value="UniProtKB-SubCell"/>
</dbReference>
<dbReference type="GO" id="GO:0008650">
    <property type="term" value="F:rRNA (uridine-2'-O-)-methyltransferase activity"/>
    <property type="evidence" value="ECO:0007669"/>
    <property type="project" value="UniProtKB-UniRule"/>
</dbReference>
<dbReference type="CDD" id="cd02440">
    <property type="entry name" value="AdoMet_MTases"/>
    <property type="match status" value="1"/>
</dbReference>
<dbReference type="FunFam" id="3.40.50.150:FF:000005">
    <property type="entry name" value="Ribosomal RNA large subunit methyltransferase E"/>
    <property type="match status" value="1"/>
</dbReference>
<dbReference type="Gene3D" id="3.40.50.150">
    <property type="entry name" value="Vaccinia Virus protein VP39"/>
    <property type="match status" value="1"/>
</dbReference>
<dbReference type="HAMAP" id="MF_01547">
    <property type="entry name" value="RNA_methyltr_E"/>
    <property type="match status" value="1"/>
</dbReference>
<dbReference type="InterPro" id="IPR050082">
    <property type="entry name" value="RNA_methyltr_RlmE"/>
</dbReference>
<dbReference type="InterPro" id="IPR002877">
    <property type="entry name" value="RNA_MeTrfase_FtsJ_dom"/>
</dbReference>
<dbReference type="InterPro" id="IPR015507">
    <property type="entry name" value="rRNA-MeTfrase_E"/>
</dbReference>
<dbReference type="InterPro" id="IPR004512">
    <property type="entry name" value="rRNA_MeTrfase_gammaproteobac"/>
</dbReference>
<dbReference type="InterPro" id="IPR029063">
    <property type="entry name" value="SAM-dependent_MTases_sf"/>
</dbReference>
<dbReference type="NCBIfam" id="NF008390">
    <property type="entry name" value="PRK11188.1"/>
    <property type="match status" value="1"/>
</dbReference>
<dbReference type="NCBIfam" id="TIGR00438">
    <property type="entry name" value="rrmJ"/>
    <property type="match status" value="1"/>
</dbReference>
<dbReference type="PANTHER" id="PTHR10920">
    <property type="entry name" value="RIBOSOMAL RNA METHYLTRANSFERASE"/>
    <property type="match status" value="1"/>
</dbReference>
<dbReference type="PANTHER" id="PTHR10920:SF18">
    <property type="entry name" value="RRNA METHYLTRANSFERASE 2, MITOCHONDRIAL"/>
    <property type="match status" value="1"/>
</dbReference>
<dbReference type="Pfam" id="PF01728">
    <property type="entry name" value="FtsJ"/>
    <property type="match status" value="1"/>
</dbReference>
<dbReference type="PIRSF" id="PIRSF005461">
    <property type="entry name" value="23S_rRNA_mtase"/>
    <property type="match status" value="1"/>
</dbReference>
<dbReference type="SUPFAM" id="SSF53335">
    <property type="entry name" value="S-adenosyl-L-methionine-dependent methyltransferases"/>
    <property type="match status" value="1"/>
</dbReference>
<reference key="1">
    <citation type="submission" date="2008-05" db="EMBL/GenBank/DDBJ databases">
        <title>Complete sequence of Shigella boydii serotype 18 strain BS512.</title>
        <authorList>
            <person name="Rasko D.A."/>
            <person name="Rosovitz M."/>
            <person name="Maurelli A.T."/>
            <person name="Myers G."/>
            <person name="Seshadri R."/>
            <person name="Cer R."/>
            <person name="Jiang L."/>
            <person name="Ravel J."/>
            <person name="Sebastian Y."/>
        </authorList>
    </citation>
    <scope>NUCLEOTIDE SEQUENCE [LARGE SCALE GENOMIC DNA]</scope>
    <source>
        <strain>CDC 3083-94 / BS512</strain>
    </source>
</reference>
<evidence type="ECO:0000255" key="1">
    <source>
        <dbReference type="HAMAP-Rule" id="MF_01547"/>
    </source>
</evidence>
<accession>B2U1Z8</accession>